<gene>
    <name evidence="14" type="primary">FXYD1</name>
    <name evidence="12" type="synonym">PLM</name>
</gene>
<protein>
    <recommendedName>
        <fullName evidence="2">Phospholemman</fullName>
    </recommendedName>
    <alternativeName>
        <fullName evidence="14">FXYD domain-containing ion transport regulator 1</fullName>
    </alternativeName>
    <alternativeName>
        <fullName evidence="13">Sodium/potassium-transporting ATPase subunit FXYD1</fullName>
    </alternativeName>
</protein>
<evidence type="ECO:0000250" key="1">
    <source>
        <dbReference type="UniProtKB" id="O08589"/>
    </source>
</evidence>
<evidence type="ECO:0000250" key="2">
    <source>
        <dbReference type="UniProtKB" id="P56513"/>
    </source>
</evidence>
<evidence type="ECO:0000250" key="3">
    <source>
        <dbReference type="UniProtKB" id="Q3SZX0"/>
    </source>
</evidence>
<evidence type="ECO:0000250" key="4">
    <source>
        <dbReference type="UniProtKB" id="Q9Z239"/>
    </source>
</evidence>
<evidence type="ECO:0000255" key="5"/>
<evidence type="ECO:0000256" key="6">
    <source>
        <dbReference type="SAM" id="MobiDB-lite"/>
    </source>
</evidence>
<evidence type="ECO:0000269" key="7">
    <source>
    </source>
</evidence>
<evidence type="ECO:0000269" key="8">
    <source>
    </source>
</evidence>
<evidence type="ECO:0000269" key="9">
    <source>
    </source>
</evidence>
<evidence type="ECO:0000269" key="10">
    <source>
    </source>
</evidence>
<evidence type="ECO:0000269" key="11">
    <source>
    </source>
</evidence>
<evidence type="ECO:0000303" key="12">
    <source>
    </source>
</evidence>
<evidence type="ECO:0000305" key="13"/>
<evidence type="ECO:0000312" key="14">
    <source>
        <dbReference type="HGNC" id="HGNC:4025"/>
    </source>
</evidence>
<evidence type="ECO:0007829" key="15">
    <source>
        <dbReference type="PDB" id="2JO1"/>
    </source>
</evidence>
<feature type="signal peptide" evidence="2">
    <location>
        <begin position="1"/>
        <end position="20"/>
    </location>
</feature>
<feature type="chain" id="PRO_0000010359" description="Phospholemman">
    <location>
        <begin position="21"/>
        <end position="92"/>
    </location>
</feature>
<feature type="topological domain" description="Extracellular" evidence="5">
    <location>
        <begin position="21"/>
        <end position="35"/>
    </location>
</feature>
<feature type="transmembrane region" description="Helical" evidence="5">
    <location>
        <begin position="36"/>
        <end position="56"/>
    </location>
</feature>
<feature type="topological domain" description="Cytoplasmic" evidence="5">
    <location>
        <begin position="57"/>
        <end position="92"/>
    </location>
</feature>
<feature type="region of interest" description="Disordered" evidence="6">
    <location>
        <begin position="65"/>
        <end position="92"/>
    </location>
</feature>
<feature type="compositionally biased region" description="Basic residues" evidence="6">
    <location>
        <begin position="83"/>
        <end position="92"/>
    </location>
</feature>
<feature type="modified residue" description="S-glutathionyl cysteine; alternate" evidence="2">
    <location>
        <position position="62"/>
    </location>
</feature>
<feature type="modified residue" description="Phosphothreonine" evidence="4">
    <location>
        <position position="79"/>
    </location>
</feature>
<feature type="modified residue" description="Phosphoserine" evidence="4">
    <location>
        <position position="82"/>
    </location>
</feature>
<feature type="modified residue" description="Phosphoserine; by PKA and PKC" evidence="2">
    <location>
        <position position="83"/>
    </location>
</feature>
<feature type="modified residue" description="Phosphoserine; by PKA" evidence="10">
    <location>
        <position position="88"/>
    </location>
</feature>
<feature type="modified residue" description="Phosphothreonine; by PKC" evidence="2">
    <location>
        <position position="89"/>
    </location>
</feature>
<feature type="lipid moiety-binding region" description="S-palmitoyl cysteine" evidence="10">
    <location>
        <position position="60"/>
    </location>
</feature>
<feature type="lipid moiety-binding region" description="S-palmitoyl cysteine; alternate" evidence="10">
    <location>
        <position position="62"/>
    </location>
</feature>
<feature type="mutagenesis site" description="Significantly reduced half-life; when associated with S-62." evidence="10">
    <original>C</original>
    <variation>S</variation>
    <location>
        <position position="60"/>
    </location>
</feature>
<feature type="mutagenesis site" description="Significantly reduced half-life; when associated with S-60." evidence="10">
    <original>C</original>
    <variation>S</variation>
    <location>
        <position position="62"/>
    </location>
</feature>
<feature type="sequence conflict" description="In Ref. 1; AAC51286." evidence="13" ref="1">
    <original>S</original>
    <variation>P</variation>
    <location>
        <position position="3"/>
    </location>
</feature>
<feature type="sequence conflict" description="In Ref. 1; AAC51286." evidence="13" ref="1">
    <original>G</original>
    <variation>H</variation>
    <location>
        <position position="5"/>
    </location>
</feature>
<feature type="helix" evidence="15">
    <location>
        <begin position="23"/>
        <end position="26"/>
    </location>
</feature>
<feature type="helix" evidence="15">
    <location>
        <begin position="28"/>
        <end position="30"/>
    </location>
</feature>
<feature type="helix" evidence="15">
    <location>
        <begin position="34"/>
        <end position="64"/>
    </location>
</feature>
<feature type="turn" evidence="15">
    <location>
        <begin position="66"/>
        <end position="68"/>
    </location>
</feature>
<feature type="strand" evidence="15">
    <location>
        <begin position="69"/>
        <end position="71"/>
    </location>
</feature>
<feature type="turn" evidence="15">
    <location>
        <begin position="75"/>
        <end position="77"/>
    </location>
</feature>
<feature type="helix" evidence="15">
    <location>
        <begin position="80"/>
        <end position="89"/>
    </location>
</feature>
<accession>O00168</accession>
<accession>A8K196</accession>
<name>PLM_HUMAN</name>
<dbReference type="EMBL" id="U72245">
    <property type="protein sequence ID" value="AAC51286.1"/>
    <property type="molecule type" value="mRNA"/>
</dbReference>
<dbReference type="EMBL" id="AK289811">
    <property type="protein sequence ID" value="BAF82500.1"/>
    <property type="molecule type" value="mRNA"/>
</dbReference>
<dbReference type="EMBL" id="BC032800">
    <property type="protein sequence ID" value="AAH32800.1"/>
    <property type="molecule type" value="mRNA"/>
</dbReference>
<dbReference type="CCDS" id="CCDS12445.1"/>
<dbReference type="RefSeq" id="NP_001265646.1">
    <property type="nucleotide sequence ID" value="NM_001278717.2"/>
</dbReference>
<dbReference type="RefSeq" id="NP_001265647.1">
    <property type="nucleotide sequence ID" value="NM_001278718.2"/>
</dbReference>
<dbReference type="RefSeq" id="NP_005022.2">
    <property type="nucleotide sequence ID" value="NM_005031.4"/>
</dbReference>
<dbReference type="RefSeq" id="NP_068702.1">
    <property type="nucleotide sequence ID" value="NM_021902.4"/>
</dbReference>
<dbReference type="RefSeq" id="XP_016882363.1">
    <property type="nucleotide sequence ID" value="XM_017026874.3"/>
</dbReference>
<dbReference type="RefSeq" id="XP_047294894.1">
    <property type="nucleotide sequence ID" value="XM_047438938.1"/>
</dbReference>
<dbReference type="RefSeq" id="XP_054177194.1">
    <property type="nucleotide sequence ID" value="XM_054321219.1"/>
</dbReference>
<dbReference type="RefSeq" id="XP_054177195.1">
    <property type="nucleotide sequence ID" value="XM_054321220.1"/>
</dbReference>
<dbReference type="PDB" id="2JO1">
    <property type="method" value="NMR"/>
    <property type="chains" value="A=21-92"/>
</dbReference>
<dbReference type="PDBsum" id="2JO1"/>
<dbReference type="BMRB" id="O00168"/>
<dbReference type="SMR" id="O00168"/>
<dbReference type="BioGRID" id="111363">
    <property type="interactions" value="29"/>
</dbReference>
<dbReference type="ComplexPortal" id="CPX-8009">
    <property type="entry name" value="Sodium:potassium-exchanging ATPase complex, FXYD1 variant"/>
</dbReference>
<dbReference type="FunCoup" id="O00168">
    <property type="interactions" value="241"/>
</dbReference>
<dbReference type="IntAct" id="O00168">
    <property type="interactions" value="12"/>
</dbReference>
<dbReference type="STRING" id="9606.ENSP00000481244"/>
<dbReference type="TCDB" id="1.A.27.1.8">
    <property type="family name" value="the phospholemman (plm) family"/>
</dbReference>
<dbReference type="iPTMnet" id="O00168"/>
<dbReference type="PhosphoSitePlus" id="O00168"/>
<dbReference type="SwissPalm" id="O00168"/>
<dbReference type="BioMuta" id="FXYD1"/>
<dbReference type="MassIVE" id="O00168"/>
<dbReference type="PaxDb" id="9606-ENSP00000481244"/>
<dbReference type="PeptideAtlas" id="O00168"/>
<dbReference type="ProteomicsDB" id="47759"/>
<dbReference type="Antibodypedia" id="65378">
    <property type="antibodies" value="273 antibodies from 31 providers"/>
</dbReference>
<dbReference type="DNASU" id="5348"/>
<dbReference type="Ensembl" id="ENST00000351325.9">
    <property type="protein sequence ID" value="ENSP00000343314.3"/>
    <property type="gene ID" value="ENSG00000266964.6"/>
</dbReference>
<dbReference type="Ensembl" id="ENST00000455515.6">
    <property type="protein sequence ID" value="ENSP00000393611.1"/>
    <property type="gene ID" value="ENSG00000266964.6"/>
</dbReference>
<dbReference type="Ensembl" id="ENST00000588081.5">
    <property type="protein sequence ID" value="ENSP00000467727.1"/>
    <property type="gene ID" value="ENSG00000266964.6"/>
</dbReference>
<dbReference type="Ensembl" id="ENST00000588607.5">
    <property type="protein sequence ID" value="ENSP00000468535.1"/>
    <property type="gene ID" value="ENSG00000266964.6"/>
</dbReference>
<dbReference type="Ensembl" id="ENST00000588715.5">
    <property type="protein sequence ID" value="ENSP00000465289.1"/>
    <property type="gene ID" value="ENSG00000266964.6"/>
</dbReference>
<dbReference type="Ensembl" id="ENST00000589209.5">
    <property type="protein sequence ID" value="ENSP00000466398.1"/>
    <property type="gene ID" value="ENSG00000266964.6"/>
</dbReference>
<dbReference type="Ensembl" id="ENST00000612146.4">
    <property type="protein sequence ID" value="ENSP00000481244.1"/>
    <property type="gene ID" value="ENSG00000266964.6"/>
</dbReference>
<dbReference type="GeneID" id="5348"/>
<dbReference type="KEGG" id="hsa:5348"/>
<dbReference type="MANE-Select" id="ENST00000351325.9">
    <property type="protein sequence ID" value="ENSP00000343314.3"/>
    <property type="RefSeq nucleotide sequence ID" value="NM_021902.4"/>
    <property type="RefSeq protein sequence ID" value="NP_068702.1"/>
</dbReference>
<dbReference type="UCSC" id="uc002nyc.5">
    <property type="organism name" value="human"/>
</dbReference>
<dbReference type="AGR" id="HGNC:4025"/>
<dbReference type="CTD" id="5348"/>
<dbReference type="DisGeNET" id="5348"/>
<dbReference type="GeneCards" id="FXYD1"/>
<dbReference type="HGNC" id="HGNC:4025">
    <property type="gene designation" value="FXYD1"/>
</dbReference>
<dbReference type="HPA" id="ENSG00000266964">
    <property type="expression patterns" value="Tissue enhanced (choroid plexus, skeletal muscle)"/>
</dbReference>
<dbReference type="MIM" id="602359">
    <property type="type" value="gene"/>
</dbReference>
<dbReference type="neXtProt" id="NX_O00168"/>
<dbReference type="OpenTargets" id="ENSG00000266964"/>
<dbReference type="PharmGKB" id="PA28441"/>
<dbReference type="VEuPathDB" id="HostDB:ENSG00000266964"/>
<dbReference type="eggNOG" id="ENOG502S5XM">
    <property type="taxonomic scope" value="Eukaryota"/>
</dbReference>
<dbReference type="GeneTree" id="ENSGT00940000153062"/>
<dbReference type="HOGENOM" id="CLU_171208_2_0_1"/>
<dbReference type="InParanoid" id="O00168"/>
<dbReference type="OMA" id="PFNYDYH"/>
<dbReference type="OrthoDB" id="8430468at2759"/>
<dbReference type="PAN-GO" id="O00168">
    <property type="GO annotations" value="2 GO annotations based on evolutionary models"/>
</dbReference>
<dbReference type="PhylomeDB" id="O00168"/>
<dbReference type="TreeFam" id="TF333443"/>
<dbReference type="PathwayCommons" id="O00168"/>
<dbReference type="Reactome" id="R-HSA-5578775">
    <property type="pathway name" value="Ion homeostasis"/>
</dbReference>
<dbReference type="Reactome" id="R-HSA-936837">
    <property type="pathway name" value="Ion transport by P-type ATPases"/>
</dbReference>
<dbReference type="Reactome" id="R-HSA-9679191">
    <property type="pathway name" value="Potential therapeutics for SARS"/>
</dbReference>
<dbReference type="SignaLink" id="O00168"/>
<dbReference type="SIGNOR" id="O00168"/>
<dbReference type="BioGRID-ORCS" id="5348">
    <property type="hits" value="20 hits in 1146 CRISPR screens"/>
</dbReference>
<dbReference type="ChiTaRS" id="FXYD1">
    <property type="organism name" value="human"/>
</dbReference>
<dbReference type="EvolutionaryTrace" id="O00168"/>
<dbReference type="GeneWiki" id="FXYD1"/>
<dbReference type="GenomeRNAi" id="5348"/>
<dbReference type="Pharos" id="O00168">
    <property type="development level" value="Tbio"/>
</dbReference>
<dbReference type="PRO" id="PR:O00168"/>
<dbReference type="Proteomes" id="UP000005640">
    <property type="component" value="Chromosome 19"/>
</dbReference>
<dbReference type="RNAct" id="O00168">
    <property type="molecule type" value="protein"/>
</dbReference>
<dbReference type="Bgee" id="ENSG00000266964">
    <property type="expression patterns" value="Expressed in hindlimb stylopod muscle and 95 other cell types or tissues"/>
</dbReference>
<dbReference type="ExpressionAtlas" id="O00168">
    <property type="expression patterns" value="baseline and differential"/>
</dbReference>
<dbReference type="GO" id="GO:0016324">
    <property type="term" value="C:apical plasma membrane"/>
    <property type="evidence" value="ECO:0000250"/>
    <property type="project" value="UniProtKB"/>
</dbReference>
<dbReference type="GO" id="GO:0005901">
    <property type="term" value="C:caveola"/>
    <property type="evidence" value="ECO:0000250"/>
    <property type="project" value="UniProtKB"/>
</dbReference>
<dbReference type="GO" id="GO:0014704">
    <property type="term" value="C:intercalated disc"/>
    <property type="evidence" value="ECO:0000250"/>
    <property type="project" value="UniProtKB"/>
</dbReference>
<dbReference type="GO" id="GO:0005886">
    <property type="term" value="C:plasma membrane"/>
    <property type="evidence" value="ECO:0000304"/>
    <property type="project" value="Reactome"/>
</dbReference>
<dbReference type="GO" id="GO:0042383">
    <property type="term" value="C:sarcolemma"/>
    <property type="evidence" value="ECO:0000250"/>
    <property type="project" value="UniProtKB"/>
</dbReference>
<dbReference type="GO" id="GO:0005890">
    <property type="term" value="C:sodium:potassium-exchanging ATPase complex"/>
    <property type="evidence" value="ECO:0000250"/>
    <property type="project" value="UniProtKB"/>
</dbReference>
<dbReference type="GO" id="GO:0030315">
    <property type="term" value="C:T-tubule"/>
    <property type="evidence" value="ECO:0000250"/>
    <property type="project" value="UniProtKB"/>
</dbReference>
<dbReference type="GO" id="GO:0005254">
    <property type="term" value="F:chloride channel activity"/>
    <property type="evidence" value="ECO:0000304"/>
    <property type="project" value="ProtInc"/>
</dbReference>
<dbReference type="GO" id="GO:0017080">
    <property type="term" value="F:sodium channel regulator activity"/>
    <property type="evidence" value="ECO:0000250"/>
    <property type="project" value="BHF-UCL"/>
</dbReference>
<dbReference type="GO" id="GO:0044325">
    <property type="term" value="F:transmembrane transporter binding"/>
    <property type="evidence" value="ECO:0000250"/>
    <property type="project" value="BHF-UCL"/>
</dbReference>
<dbReference type="GO" id="GO:0006821">
    <property type="term" value="P:chloride transport"/>
    <property type="evidence" value="ECO:0000304"/>
    <property type="project" value="ProtInc"/>
</dbReference>
<dbReference type="GO" id="GO:0006936">
    <property type="term" value="P:muscle contraction"/>
    <property type="evidence" value="ECO:0000304"/>
    <property type="project" value="ProtInc"/>
</dbReference>
<dbReference type="GO" id="GO:0010734">
    <property type="term" value="P:negative regulation of protein glutathionylation"/>
    <property type="evidence" value="ECO:0000250"/>
    <property type="project" value="UniProtKB"/>
</dbReference>
<dbReference type="GO" id="GO:1903278">
    <property type="term" value="P:positive regulation of sodium ion export across plasma membrane"/>
    <property type="evidence" value="ECO:0000250"/>
    <property type="project" value="UniProtKB"/>
</dbReference>
<dbReference type="GO" id="GO:0006813">
    <property type="term" value="P:potassium ion transport"/>
    <property type="evidence" value="ECO:0007669"/>
    <property type="project" value="UniProtKB-KW"/>
</dbReference>
<dbReference type="GO" id="GO:0086036">
    <property type="term" value="P:regulation of cardiac muscle cell membrane potential"/>
    <property type="evidence" value="ECO:0000250"/>
    <property type="project" value="BHF-UCL"/>
</dbReference>
<dbReference type="GO" id="GO:0008016">
    <property type="term" value="P:regulation of heart contraction"/>
    <property type="evidence" value="ECO:0000304"/>
    <property type="project" value="BHF-UCL"/>
</dbReference>
<dbReference type="GO" id="GO:0006814">
    <property type="term" value="P:sodium ion transport"/>
    <property type="evidence" value="ECO:0007669"/>
    <property type="project" value="UniProtKB-KW"/>
</dbReference>
<dbReference type="CDD" id="cd20317">
    <property type="entry name" value="FXYD1"/>
    <property type="match status" value="1"/>
</dbReference>
<dbReference type="FunFam" id="1.20.5.780:FF:000002">
    <property type="entry name" value="FXYD domain-containing ion transport regulator"/>
    <property type="match status" value="1"/>
</dbReference>
<dbReference type="Gene3D" id="1.20.5.780">
    <property type="entry name" value="Single helix bin"/>
    <property type="match status" value="1"/>
</dbReference>
<dbReference type="InterPro" id="IPR047297">
    <property type="entry name" value="FXYD_motif"/>
</dbReference>
<dbReference type="InterPro" id="IPR000272">
    <property type="entry name" value="Ion-transport_regulator_FXYD"/>
</dbReference>
<dbReference type="InterPro" id="IPR047281">
    <property type="entry name" value="PLM"/>
</dbReference>
<dbReference type="PANTHER" id="PTHR14132:SF12">
    <property type="entry name" value="PHOSPHOLEMMAN"/>
    <property type="match status" value="1"/>
</dbReference>
<dbReference type="PANTHER" id="PTHR14132">
    <property type="entry name" value="SODIUM/POTASSIUM-TRANSPORTING ATPASE SUBUNIT GAMMA"/>
    <property type="match status" value="1"/>
</dbReference>
<dbReference type="Pfam" id="PF02038">
    <property type="entry name" value="ATP1G1_PLM_MAT8"/>
    <property type="match status" value="1"/>
</dbReference>
<dbReference type="PROSITE" id="PS01310">
    <property type="entry name" value="FXYD"/>
    <property type="match status" value="1"/>
</dbReference>
<proteinExistence type="evidence at protein level"/>
<sequence>MASLGHILVFCVGLLTMAKAESPKEHDPFTYDYQSLQIGGLVIAGILFILGILIVLSRRCRCKFNQQQRTGEPDEEEGTFRSSIRRLSTRRR</sequence>
<organism>
    <name type="scientific">Homo sapiens</name>
    <name type="common">Human</name>
    <dbReference type="NCBI Taxonomy" id="9606"/>
    <lineage>
        <taxon>Eukaryota</taxon>
        <taxon>Metazoa</taxon>
        <taxon>Chordata</taxon>
        <taxon>Craniata</taxon>
        <taxon>Vertebrata</taxon>
        <taxon>Euteleostomi</taxon>
        <taxon>Mammalia</taxon>
        <taxon>Eutheria</taxon>
        <taxon>Euarchontoglires</taxon>
        <taxon>Primates</taxon>
        <taxon>Haplorrhini</taxon>
        <taxon>Catarrhini</taxon>
        <taxon>Hominidae</taxon>
        <taxon>Homo</taxon>
    </lineage>
</organism>
<keyword id="KW-0002">3D-structure</keyword>
<keyword id="KW-1003">Cell membrane</keyword>
<keyword id="KW-0318">Glutathionylation</keyword>
<keyword id="KW-0406">Ion transport</keyword>
<keyword id="KW-0449">Lipoprotein</keyword>
<keyword id="KW-0472">Membrane</keyword>
<keyword id="KW-0564">Palmitate</keyword>
<keyword id="KW-0597">Phosphoprotein</keyword>
<keyword id="KW-0630">Potassium</keyword>
<keyword id="KW-0633">Potassium transport</keyword>
<keyword id="KW-1267">Proteomics identification</keyword>
<keyword id="KW-1185">Reference proteome</keyword>
<keyword id="KW-0732">Signal</keyword>
<keyword id="KW-0915">Sodium</keyword>
<keyword id="KW-0739">Sodium transport</keyword>
<keyword id="KW-0740">Sodium/potassium transport</keyword>
<keyword id="KW-0812">Transmembrane</keyword>
<keyword id="KW-1133">Transmembrane helix</keyword>
<keyword id="KW-0813">Transport</keyword>
<reference key="1">
    <citation type="journal article" date="1997" name="Genomics">
        <title>Characterization of the human and rat phospholemman (PLM) cDNAs and localization of the human PLM gene to chromosome 19q13.1.</title>
        <authorList>
            <person name="Chen L.-S.K."/>
            <person name="Lo C.F."/>
            <person name="Numann R."/>
            <person name="Cuddy M."/>
        </authorList>
    </citation>
    <scope>NUCLEOTIDE SEQUENCE [MRNA]</scope>
    <scope>TISSUE SPECIFICITY</scope>
    <source>
        <tissue>Heart</tissue>
    </source>
</reference>
<reference key="2">
    <citation type="journal article" date="2000" name="Genomics">
        <title>The FXYD gene family of small ion transport regulators or channels: cDNA sequence, protein signature sequence, and expression.</title>
        <authorList>
            <person name="Sweadner K.J."/>
            <person name="Rael E."/>
        </authorList>
    </citation>
    <scope>NUCLEOTIDE SEQUENCE [MRNA]</scope>
</reference>
<reference key="3">
    <citation type="journal article" date="2004" name="Nat. Genet.">
        <title>Complete sequencing and characterization of 21,243 full-length human cDNAs.</title>
        <authorList>
            <person name="Ota T."/>
            <person name="Suzuki Y."/>
            <person name="Nishikawa T."/>
            <person name="Otsuki T."/>
            <person name="Sugiyama T."/>
            <person name="Irie R."/>
            <person name="Wakamatsu A."/>
            <person name="Hayashi K."/>
            <person name="Sato H."/>
            <person name="Nagai K."/>
            <person name="Kimura K."/>
            <person name="Makita H."/>
            <person name="Sekine M."/>
            <person name="Obayashi M."/>
            <person name="Nishi T."/>
            <person name="Shibahara T."/>
            <person name="Tanaka T."/>
            <person name="Ishii S."/>
            <person name="Yamamoto J."/>
            <person name="Saito K."/>
            <person name="Kawai Y."/>
            <person name="Isono Y."/>
            <person name="Nakamura Y."/>
            <person name="Nagahari K."/>
            <person name="Murakami K."/>
            <person name="Yasuda T."/>
            <person name="Iwayanagi T."/>
            <person name="Wagatsuma M."/>
            <person name="Shiratori A."/>
            <person name="Sudo H."/>
            <person name="Hosoiri T."/>
            <person name="Kaku Y."/>
            <person name="Kodaira H."/>
            <person name="Kondo H."/>
            <person name="Sugawara M."/>
            <person name="Takahashi M."/>
            <person name="Kanda K."/>
            <person name="Yokoi T."/>
            <person name="Furuya T."/>
            <person name="Kikkawa E."/>
            <person name="Omura Y."/>
            <person name="Abe K."/>
            <person name="Kamihara K."/>
            <person name="Katsuta N."/>
            <person name="Sato K."/>
            <person name="Tanikawa M."/>
            <person name="Yamazaki M."/>
            <person name="Ninomiya K."/>
            <person name="Ishibashi T."/>
            <person name="Yamashita H."/>
            <person name="Murakawa K."/>
            <person name="Fujimori K."/>
            <person name="Tanai H."/>
            <person name="Kimata M."/>
            <person name="Watanabe M."/>
            <person name="Hiraoka S."/>
            <person name="Chiba Y."/>
            <person name="Ishida S."/>
            <person name="Ono Y."/>
            <person name="Takiguchi S."/>
            <person name="Watanabe S."/>
            <person name="Yosida M."/>
            <person name="Hotuta T."/>
            <person name="Kusano J."/>
            <person name="Kanehori K."/>
            <person name="Takahashi-Fujii A."/>
            <person name="Hara H."/>
            <person name="Tanase T.-O."/>
            <person name="Nomura Y."/>
            <person name="Togiya S."/>
            <person name="Komai F."/>
            <person name="Hara R."/>
            <person name="Takeuchi K."/>
            <person name="Arita M."/>
            <person name="Imose N."/>
            <person name="Musashino K."/>
            <person name="Yuuki H."/>
            <person name="Oshima A."/>
            <person name="Sasaki N."/>
            <person name="Aotsuka S."/>
            <person name="Yoshikawa Y."/>
            <person name="Matsunawa H."/>
            <person name="Ichihara T."/>
            <person name="Shiohata N."/>
            <person name="Sano S."/>
            <person name="Moriya S."/>
            <person name="Momiyama H."/>
            <person name="Satoh N."/>
            <person name="Takami S."/>
            <person name="Terashima Y."/>
            <person name="Suzuki O."/>
            <person name="Nakagawa S."/>
            <person name="Senoh A."/>
            <person name="Mizoguchi H."/>
            <person name="Goto Y."/>
            <person name="Shimizu F."/>
            <person name="Wakebe H."/>
            <person name="Hishigaki H."/>
            <person name="Watanabe T."/>
            <person name="Sugiyama A."/>
            <person name="Takemoto M."/>
            <person name="Kawakami B."/>
            <person name="Yamazaki M."/>
            <person name="Watanabe K."/>
            <person name="Kumagai A."/>
            <person name="Itakura S."/>
            <person name="Fukuzumi Y."/>
            <person name="Fujimori Y."/>
            <person name="Komiyama M."/>
            <person name="Tashiro H."/>
            <person name="Tanigami A."/>
            <person name="Fujiwara T."/>
            <person name="Ono T."/>
            <person name="Yamada K."/>
            <person name="Fujii Y."/>
            <person name="Ozaki K."/>
            <person name="Hirao M."/>
            <person name="Ohmori Y."/>
            <person name="Kawabata A."/>
            <person name="Hikiji T."/>
            <person name="Kobatake N."/>
            <person name="Inagaki H."/>
            <person name="Ikema Y."/>
            <person name="Okamoto S."/>
            <person name="Okitani R."/>
            <person name="Kawakami T."/>
            <person name="Noguchi S."/>
            <person name="Itoh T."/>
            <person name="Shigeta K."/>
            <person name="Senba T."/>
            <person name="Matsumura K."/>
            <person name="Nakajima Y."/>
            <person name="Mizuno T."/>
            <person name="Morinaga M."/>
            <person name="Sasaki M."/>
            <person name="Togashi T."/>
            <person name="Oyama M."/>
            <person name="Hata H."/>
            <person name="Watanabe M."/>
            <person name="Komatsu T."/>
            <person name="Mizushima-Sugano J."/>
            <person name="Satoh T."/>
            <person name="Shirai Y."/>
            <person name="Takahashi Y."/>
            <person name="Nakagawa K."/>
            <person name="Okumura K."/>
            <person name="Nagase T."/>
            <person name="Nomura N."/>
            <person name="Kikuchi H."/>
            <person name="Masuho Y."/>
            <person name="Yamashita R."/>
            <person name="Nakai K."/>
            <person name="Yada T."/>
            <person name="Nakamura Y."/>
            <person name="Ohara O."/>
            <person name="Isogai T."/>
            <person name="Sugano S."/>
        </authorList>
    </citation>
    <scope>NUCLEOTIDE SEQUENCE [LARGE SCALE MRNA]</scope>
    <source>
        <tissue>Brain</tissue>
    </source>
</reference>
<reference key="4">
    <citation type="journal article" date="2004" name="Genome Res.">
        <title>The status, quality, and expansion of the NIH full-length cDNA project: the Mammalian Gene Collection (MGC).</title>
        <authorList>
            <consortium name="The MGC Project Team"/>
        </authorList>
    </citation>
    <scope>NUCLEOTIDE SEQUENCE [LARGE SCALE MRNA]</scope>
    <source>
        <tissue>Brain</tissue>
        <tissue>Lung</tissue>
        <tissue>Testis</tissue>
    </source>
</reference>
<reference key="5">
    <citation type="journal article" date="2000" name="J. Biol. Chem.">
        <title>Phospholemman is a substrate for myotonic dystrophy protein kinase.</title>
        <authorList>
            <person name="Mounsey J.P."/>
            <person name="John J.E. III"/>
            <person name="Helmke S.M."/>
            <person name="Bush E.W."/>
            <person name="Gilbert J."/>
            <person name="Roses A.D."/>
            <person name="Perryman M.B."/>
            <person name="Jones L.R."/>
            <person name="Moorman J.R."/>
        </authorList>
    </citation>
    <scope>PHOSPHORYLATION BY DMPK</scope>
</reference>
<reference key="6">
    <citation type="journal article" date="2006" name="Protein Sci.">
        <title>Secondary structure, orientation, and oligomerization of phospholemman, a cardiac transmembrane protein.</title>
        <authorList>
            <person name="Beevers A.J."/>
            <person name="Kukol A."/>
        </authorList>
    </citation>
    <scope>SUBUNIT</scope>
</reference>
<reference key="7">
    <citation type="journal article" date="2011" name="J. Biol. Chem.">
        <title>The inhibitory effect of phospholemman on the sodium pump requires its palmitoylation.</title>
        <authorList>
            <person name="Tulloch L.B."/>
            <person name="Howie J."/>
            <person name="Wypijewski K.J."/>
            <person name="Wilson C.R."/>
            <person name="Bernard W.G."/>
            <person name="Shattock M.J."/>
            <person name="Fuller W."/>
        </authorList>
    </citation>
    <scope>PALMITOYLATION AT CYS-60 AND CYS-62</scope>
    <scope>PHOSPHORYLATION AT SER-88</scope>
    <scope>MUTAGENESIS OF CYS-60 AND CYS-62</scope>
</reference>
<reference key="8">
    <citation type="journal article" date="2007" name="Biochemistry">
        <title>Structure of the Na,K-ATPase regulatory protein FXYD1 in micelles.</title>
        <authorList>
            <person name="Teriete P."/>
            <person name="Franzin C.M."/>
            <person name="Choi J."/>
            <person name="Marassi F.M."/>
        </authorList>
    </citation>
    <scope>STRUCTURE BY NMR OF 21-92</scope>
    <scope>SUBUNIT</scope>
</reference>
<comment type="function">
    <text evidence="1 2 4">Associates with and regulates the activity of the sodium/potassium-transporting ATPase (NKA) which transports Na(+) out of the cell and K(+) into the cell. Inhibits NKA activity in its unphosphorylated state and stimulates activity when phosphorylated. Reduces glutathionylation of the NKA beta-1 subunit ATP1B1, thus reversing glutathionylation-mediated inhibition of ATP1B1. Contributes to female sexual development by maintaining the excitability of neurons which secrete gonadotropin-releasing hormone.</text>
</comment>
<comment type="subunit">
    <text evidence="1 2 3 4 8 9">Homotetramer (PubMed:16597826). Monomer (PubMed:17511473). Regulatory subunit of the sodium/potassium-transporting ATPase (NKA) which is composed of a catalytic alpha subunit, an auxiliary non-catalytic beta subunit and an additional regulatory subunit (By similarity). The monomeric form associates with NKA while the oligomeric form does not (By similarity). Interacts with the catalytic alpha-1 subunit ATP1A1 (By similarity). Also interacts with the catalytic alpha-2 and alpha-3 subunits ATP1A2 and ATP1A3 (By similarity). Very little interaction with ATP1A1, ATP1A2 or ATP1A3 when phosphorylated at Ser-83 (By similarity). Interacts with the non-catalytic beta-1 subunit ATP1B1 (By similarity). Oxidative stress decreases interaction with ATP1A1 but increases interaction with ATP1B1 (By similarity).</text>
</comment>
<comment type="subcellular location">
    <subcellularLocation>
        <location evidence="2">Cell membrane</location>
        <location evidence="2">Sarcolemma</location>
        <topology evidence="5">Single-pass type I membrane protein</topology>
    </subcellularLocation>
    <subcellularLocation>
        <location evidence="1">Apical cell membrane</location>
        <topology evidence="5">Single-pass type I membrane protein</topology>
    </subcellularLocation>
    <subcellularLocation>
        <location evidence="1">Membrane</location>
        <location evidence="1">Caveola</location>
    </subcellularLocation>
    <subcellularLocation>
        <location evidence="1">Cell membrane</location>
        <location evidence="1">Sarcolemma</location>
        <location evidence="1">T-tubule</location>
    </subcellularLocation>
    <text evidence="1">Detected in the apical cell membrane in brain. In myocytes, localizes to sarcolemma, t-tubules and intercalated disks.</text>
</comment>
<comment type="tissue specificity">
    <text evidence="11">Highest expression in skeletal muscle and heart. Moderate levels in brain, placenta, lung, liver, pancreas, uterus, bladder, prostate, small intestine and colon with mucosal lining. Very low levels in kidney, colon and small intestine without mucosa, prostate without endothelial lining, spleen, and testis.</text>
</comment>
<comment type="domain">
    <text evidence="1">The cytoplasmic domain is sufficient to regulate sodium/potassium-transporting ATPase activity.</text>
</comment>
<comment type="PTM">
    <text evidence="1 2 7">Major plasma membrane substrate for cAMP-dependent protein kinase (PKA) and protein kinase C (PKC) in several different tissues (By similarity). Phosphorylated in response to insulin and adrenergic stimulation (By similarity). Phosphorylation at Ser-88 stimulates sodium/potassium-transporting ATPase activity while the unphosphorylated form inhibits sodium/potassium-transporting ATPase activity (By similarity). Phosphorylation increases tetramerization, decreases binding to ATP1A1 and reduces inhibition of ATP1A1 activity (By similarity). Phosphorylation at Ser-83 leads to greatly reduced interaction with ATP1A1, ATP1A2 and ATP1A3 (By similarity). May be phosphorylated by DMPK (PubMed:10811636).</text>
</comment>
<comment type="PTM">
    <text evidence="10">Palmitoylation increases half-life and stability and is enhanced upon phosphorylation at Ser-88 by PKA.</text>
</comment>
<comment type="similarity">
    <text evidence="13">Belongs to the FXYD family.</text>
</comment>